<proteinExistence type="evidence at protein level"/>
<sequence>LSLHEYMSMELLQEAGVSIP</sequence>
<keyword id="KW-0067">ATP-binding</keyword>
<keyword id="KW-0903">Direct protein sequencing</keyword>
<keyword id="KW-0436">Ligase</keyword>
<keyword id="KW-0496">Mitochondrion</keyword>
<keyword id="KW-0547">Nucleotide-binding</keyword>
<keyword id="KW-1185">Reference proteome</keyword>
<keyword id="KW-0816">Tricarboxylic acid cycle</keyword>
<feature type="chain" id="PRO_0000102813" description="Succinate--CoA ligase [ADP-forming] subunit beta, mitochondrial">
    <location>
        <begin position="1"/>
        <end position="20" status="greater than"/>
    </location>
</feature>
<feature type="domain" description="ATP-grasp" evidence="2">
    <location>
        <begin position="8"/>
        <end position="20" status="greater than"/>
    </location>
</feature>
<feature type="non-terminal residue">
    <location>
        <position position="20"/>
    </location>
</feature>
<reference key="1">
    <citation type="journal article" date="1997" name="Electrophoresis">
        <title>HSC-2DPAGE and the two-dimensional gel electrophoresis database of dog heart proteins.</title>
        <authorList>
            <person name="Dunn M.J."/>
            <person name="Corbett J.M."/>
            <person name="Wheeler C.H."/>
        </authorList>
    </citation>
    <scope>PROTEIN SEQUENCE</scope>
    <source>
        <tissue>Heart</tissue>
    </source>
</reference>
<dbReference type="EC" id="6.2.1.5" evidence="1"/>
<dbReference type="FunCoup" id="P99507">
    <property type="interactions" value="2120"/>
</dbReference>
<dbReference type="STRING" id="9615.ENSCAFP00000006646"/>
<dbReference type="PaxDb" id="9615-ENSCAFP00000006646"/>
<dbReference type="InParanoid" id="P99507"/>
<dbReference type="OrthoDB" id="1552at2759"/>
<dbReference type="UniPathway" id="UPA00223">
    <property type="reaction ID" value="UER00999"/>
</dbReference>
<dbReference type="Proteomes" id="UP000002254">
    <property type="component" value="Unplaced"/>
</dbReference>
<dbReference type="Proteomes" id="UP000694429">
    <property type="component" value="Unplaced"/>
</dbReference>
<dbReference type="Proteomes" id="UP000694542">
    <property type="component" value="Unplaced"/>
</dbReference>
<dbReference type="Proteomes" id="UP000805418">
    <property type="component" value="Unplaced"/>
</dbReference>
<dbReference type="GO" id="GO:0005739">
    <property type="term" value="C:mitochondrion"/>
    <property type="evidence" value="ECO:0007669"/>
    <property type="project" value="UniProtKB-SubCell"/>
</dbReference>
<dbReference type="GO" id="GO:0005524">
    <property type="term" value="F:ATP binding"/>
    <property type="evidence" value="ECO:0007669"/>
    <property type="project" value="UniProtKB-KW"/>
</dbReference>
<dbReference type="GO" id="GO:0004775">
    <property type="term" value="F:succinate-CoA ligase (ADP-forming) activity"/>
    <property type="evidence" value="ECO:0007669"/>
    <property type="project" value="UniProtKB-EC"/>
</dbReference>
<dbReference type="GO" id="GO:0006099">
    <property type="term" value="P:tricarboxylic acid cycle"/>
    <property type="evidence" value="ECO:0007669"/>
    <property type="project" value="UniProtKB-UniPathway"/>
</dbReference>
<accession>P99507</accession>
<protein>
    <recommendedName>
        <fullName evidence="1">Succinate--CoA ligase [ADP-forming] subunit beta, mitochondrial</fullName>
        <ecNumber evidence="1">6.2.1.5</ecNumber>
    </recommendedName>
    <alternativeName>
        <fullName evidence="1">ATP-specific succinyl-CoA synthetase subunit beta</fullName>
        <shortName evidence="1">A-SCS</shortName>
    </alternativeName>
    <alternativeName>
        <fullName evidence="1">Succinyl-CoA synthetase beta-A chain</fullName>
        <shortName evidence="1">SCS-betaA</shortName>
    </alternativeName>
</protein>
<organism>
    <name type="scientific">Canis lupus familiaris</name>
    <name type="common">Dog</name>
    <name type="synonym">Canis familiaris</name>
    <dbReference type="NCBI Taxonomy" id="9615"/>
    <lineage>
        <taxon>Eukaryota</taxon>
        <taxon>Metazoa</taxon>
        <taxon>Chordata</taxon>
        <taxon>Craniata</taxon>
        <taxon>Vertebrata</taxon>
        <taxon>Euteleostomi</taxon>
        <taxon>Mammalia</taxon>
        <taxon>Eutheria</taxon>
        <taxon>Laurasiatheria</taxon>
        <taxon>Carnivora</taxon>
        <taxon>Caniformia</taxon>
        <taxon>Canidae</taxon>
        <taxon>Canis</taxon>
    </lineage>
</organism>
<evidence type="ECO:0000250" key="1">
    <source>
        <dbReference type="UniProtKB" id="Q9YI37"/>
    </source>
</evidence>
<evidence type="ECO:0000255" key="2">
    <source>
        <dbReference type="PROSITE-ProRule" id="PRU00409"/>
    </source>
</evidence>
<evidence type="ECO:0000305" key="3"/>
<comment type="function">
    <text evidence="1">ATP-specific succinyl-CoA synthetase functions in the citric acid cycle (TCA), coupling the hydrolysis of succinyl-CoA to the synthesis of ATP and thus represents the only step of substrate-level phosphorylation in the TCA. The beta subunit provides nucleotide specificity of the enzyme and binds the substrate succinate, while the binding sites for coenzyme A and phosphate are found in the alpha subunit.</text>
</comment>
<comment type="catalytic activity">
    <reaction evidence="1">
        <text>succinate + ATP + CoA = succinyl-CoA + ADP + phosphate</text>
        <dbReference type="Rhea" id="RHEA:17661"/>
        <dbReference type="ChEBI" id="CHEBI:30031"/>
        <dbReference type="ChEBI" id="CHEBI:30616"/>
        <dbReference type="ChEBI" id="CHEBI:43474"/>
        <dbReference type="ChEBI" id="CHEBI:57287"/>
        <dbReference type="ChEBI" id="CHEBI:57292"/>
        <dbReference type="ChEBI" id="CHEBI:456216"/>
        <dbReference type="EC" id="6.2.1.5"/>
    </reaction>
</comment>
<comment type="pathway">
    <text evidence="1">Carbohydrate metabolism; tricarboxylic acid cycle; succinate from succinyl-CoA (ligase route): step 1/1.</text>
</comment>
<comment type="subunit">
    <text evidence="1">Heterodimer of an alpha and a beta subunit. The beta subunit determines specificity for ATP. Interacts with ALAS2 (By similarity).</text>
</comment>
<comment type="subcellular location">
    <subcellularLocation>
        <location evidence="1">Mitochondrion</location>
    </subcellularLocation>
</comment>
<comment type="similarity">
    <text evidence="3">Belongs to the succinate/malate CoA ligase beta subunit family. ATP-specific subunit beta subfamily.</text>
</comment>
<name>SUCB1_CANLF</name>
<gene>
    <name evidence="1" type="primary">SUCLA2</name>
</gene>